<dbReference type="SMR" id="P56164"/>
<dbReference type="Allergome" id="1658">
    <property type="allergen name" value="Pha a 5.0101"/>
</dbReference>
<dbReference type="Allergome" id="548">
    <property type="allergen name" value="Pha a 5"/>
</dbReference>
<dbReference type="CDD" id="cd12805">
    <property type="entry name" value="Allergen_V_VI"/>
    <property type="match status" value="2"/>
</dbReference>
<dbReference type="Gene3D" id="1.20.120.320">
    <property type="entry name" value="Group V grass pollen allergen"/>
    <property type="match status" value="2"/>
</dbReference>
<dbReference type="InterPro" id="IPR002914">
    <property type="entry name" value="Poa_pIX/Phl_pVI"/>
</dbReference>
<dbReference type="InterPro" id="IPR035506">
    <property type="entry name" value="Pollen_allergen/Os"/>
</dbReference>
<dbReference type="Pfam" id="PF01620">
    <property type="entry name" value="Pollen_allerg_2"/>
    <property type="match status" value="2"/>
</dbReference>
<dbReference type="PRINTS" id="PR00833">
    <property type="entry name" value="POAALLERGEN"/>
</dbReference>
<dbReference type="SUPFAM" id="SSF81736">
    <property type="entry name" value="Group V grass pollen allergen"/>
    <property type="match status" value="2"/>
</dbReference>
<comment type="allergen">
    <text>Causes an allergic reaction in human. Causes grass pollen allergy.</text>
</comment>
<comment type="similarity">
    <text evidence="3">Belongs to the Poa p IX/Phl p VI allergen family.</text>
</comment>
<accession>P56164</accession>
<reference key="1">
    <citation type="journal article" date="1995" name="Clin. Exp. Allergy">
        <title>Cloning, sequencing and expression in Escherichia coli of Pha a 1 and four isoforms of Pha a 5, the major allergens of canary grass pollen.</title>
        <authorList>
            <person name="Suphioglu C."/>
            <person name="Singh M.B."/>
        </authorList>
    </citation>
    <scope>NUCLEOTIDE SEQUENCE</scope>
    <source>
        <tissue>Pollen</tissue>
    </source>
</reference>
<name>MPA51_PHAAQ</name>
<evidence type="ECO:0000255" key="1"/>
<evidence type="ECO:0000256" key="2">
    <source>
        <dbReference type="SAM" id="MobiDB-lite"/>
    </source>
</evidence>
<evidence type="ECO:0000305" key="3"/>
<organism>
    <name type="scientific">Phalaris aquatica</name>
    <name type="common">Canary grass</name>
    <dbReference type="NCBI Taxonomy" id="28479"/>
    <lineage>
        <taxon>Eukaryota</taxon>
        <taxon>Viridiplantae</taxon>
        <taxon>Streptophyta</taxon>
        <taxon>Embryophyta</taxon>
        <taxon>Tracheophyta</taxon>
        <taxon>Spermatophyta</taxon>
        <taxon>Magnoliopsida</taxon>
        <taxon>Liliopsida</taxon>
        <taxon>Poales</taxon>
        <taxon>Poaceae</taxon>
        <taxon>BOP clade</taxon>
        <taxon>Pooideae</taxon>
        <taxon>Poodae</taxon>
        <taxon>Poeae</taxon>
        <taxon>Poeae Chloroplast Group 1 (Aveneae type)</taxon>
        <taxon>Phalaridinae</taxon>
        <taxon>Phalaris</taxon>
    </lineage>
</organism>
<proteinExistence type="evidence at protein level"/>
<protein>
    <recommendedName>
        <fullName>Major pollen allergen Pha a 5.1</fullName>
    </recommendedName>
    <alternativeName>
        <fullName>Allergen Pha a 5</fullName>
    </alternativeName>
    <allergenName>Pha a 5.1</allergenName>
</protein>
<keyword id="KW-0020">Allergen</keyword>
<keyword id="KW-0732">Signal</keyword>
<feature type="signal peptide" evidence="1">
    <location>
        <begin position="1"/>
        <end position="23"/>
    </location>
</feature>
<feature type="chain" id="PRO_0000021739" description="Major pollen allergen Pha a 5.1">
    <location>
        <begin position="24"/>
        <end position="320"/>
    </location>
</feature>
<feature type="region of interest" description="Disordered" evidence="2">
    <location>
        <begin position="21"/>
        <end position="45"/>
    </location>
</feature>
<feature type="compositionally biased region" description="Pro residues" evidence="2">
    <location>
        <begin position="22"/>
        <end position="37"/>
    </location>
</feature>
<sequence>MAVQKYTMALFLAVALVAGPAAPTPPTPRTPPLLPPPRARDKATLTSRSVEDINAASRRPWWASVPPADKFKTFADHVLCVPNADVTSAATKAPQLKAKLDAAYRVAYEAAEGSTPEAKYDAFIAALTEALRVIAGAFEVHAVKPATEEVVADPVGELQIVDKIDAAFKIAATAANSAPANDKFTVFEGAFNKAIKESTAGAYETYKFIPSLEAAVKQAYGATVARAPEVKYAVFEAGLTKAITAMSEAQKVAKPPLSPQPPQVLPLAAGGAATVAAASDVRVCRSHGTLQDACLLRCRGGCQPVVWRGGSHRARGGYKV</sequence>